<reference key="1">
    <citation type="journal article" date="2005" name="J. Neurochem.">
        <title>The cysteine-rich with EGF-like domains 2 (CRELD2) protein interacts with the large cytoplasmic domain of human neuronal nicotinic acetylcholine receptor alpha4 and beta2 subunits.</title>
        <authorList>
            <person name="Ortiz J.A."/>
            <person name="Castillo M."/>
            <person name="Dominguez del Toro E."/>
            <person name="Mulet J."/>
            <person name="Gerber S."/>
            <person name="Valor L.M."/>
            <person name="Sala S."/>
            <person name="Sala F."/>
            <person name="Gutierrez L.M."/>
            <person name="Criado M."/>
        </authorList>
    </citation>
    <scope>NUCLEOTIDE SEQUENCE [MRNA] (ISOFORM 3)</scope>
    <scope>FUNCTION</scope>
    <scope>INTERACTION WITH CHRNA4</scope>
    <scope>SUBCELLULAR LOCATION</scope>
    <scope>TISSUE SPECIFICITY</scope>
    <source>
        <tissue>Brain</tissue>
    </source>
</reference>
<reference key="2">
    <citation type="journal article" date="2006" name="Gene">
        <title>CRELD2: gene mapping, alternate splicing, and comparative genomic identification of the promoter region.</title>
        <authorList>
            <person name="Maslen C.L."/>
            <person name="Babcock D."/>
            <person name="Redig J.K."/>
            <person name="Kapeli K."/>
            <person name="Akkari Y.M."/>
            <person name="Olson S.B."/>
        </authorList>
    </citation>
    <scope>NUCLEOTIDE SEQUENCE [MRNA] (ISOFORMS 1; 2; 4; 5 AND 6)</scope>
    <scope>ALTERNATIVE SPLICING (ISOFORMS 1; 2; 3; 4; 5 AND 6)</scope>
    <scope>TISSUE SPECIFICITY</scope>
    <scope>DEVELOPMENTAL STAGE</scope>
</reference>
<reference key="3">
    <citation type="journal article" date="2003" name="Genome Res.">
        <title>The secreted protein discovery initiative (SPDI), a large-scale effort to identify novel human secreted and transmembrane proteins: a bioinformatics assessment.</title>
        <authorList>
            <person name="Clark H.F."/>
            <person name="Gurney A.L."/>
            <person name="Abaya E."/>
            <person name="Baker K."/>
            <person name="Baldwin D.T."/>
            <person name="Brush J."/>
            <person name="Chen J."/>
            <person name="Chow B."/>
            <person name="Chui C."/>
            <person name="Crowley C."/>
            <person name="Currell B."/>
            <person name="Deuel B."/>
            <person name="Dowd P."/>
            <person name="Eaton D."/>
            <person name="Foster J.S."/>
            <person name="Grimaldi C."/>
            <person name="Gu Q."/>
            <person name="Hass P.E."/>
            <person name="Heldens S."/>
            <person name="Huang A."/>
            <person name="Kim H.S."/>
            <person name="Klimowski L."/>
            <person name="Jin Y."/>
            <person name="Johnson S."/>
            <person name="Lee J."/>
            <person name="Lewis L."/>
            <person name="Liao D."/>
            <person name="Mark M.R."/>
            <person name="Robbie E."/>
            <person name="Sanchez C."/>
            <person name="Schoenfeld J."/>
            <person name="Seshagiri S."/>
            <person name="Simmons L."/>
            <person name="Singh J."/>
            <person name="Smith V."/>
            <person name="Stinson J."/>
            <person name="Vagts A."/>
            <person name="Vandlen R.L."/>
            <person name="Watanabe C."/>
            <person name="Wieand D."/>
            <person name="Woods K."/>
            <person name="Xie M.-H."/>
            <person name="Yansura D.G."/>
            <person name="Yi S."/>
            <person name="Yu G."/>
            <person name="Yuan J."/>
            <person name="Zhang M."/>
            <person name="Zhang Z."/>
            <person name="Goddard A.D."/>
            <person name="Wood W.I."/>
            <person name="Godowski P.J."/>
            <person name="Gray A.M."/>
        </authorList>
    </citation>
    <scope>NUCLEOTIDE SEQUENCE [LARGE SCALE MRNA] (ISOFORM 1)</scope>
</reference>
<reference key="4">
    <citation type="journal article" date="1999" name="Nature">
        <title>The DNA sequence of human chromosome 22.</title>
        <authorList>
            <person name="Dunham I."/>
            <person name="Hunt A.R."/>
            <person name="Collins J.E."/>
            <person name="Bruskiewich R."/>
            <person name="Beare D.M."/>
            <person name="Clamp M."/>
            <person name="Smink L.J."/>
            <person name="Ainscough R."/>
            <person name="Almeida J.P."/>
            <person name="Babbage A.K."/>
            <person name="Bagguley C."/>
            <person name="Bailey J."/>
            <person name="Barlow K.F."/>
            <person name="Bates K.N."/>
            <person name="Beasley O.P."/>
            <person name="Bird C.P."/>
            <person name="Blakey S.E."/>
            <person name="Bridgeman A.M."/>
            <person name="Buck D."/>
            <person name="Burgess J."/>
            <person name="Burrill W.D."/>
            <person name="Burton J."/>
            <person name="Carder C."/>
            <person name="Carter N.P."/>
            <person name="Chen Y."/>
            <person name="Clark G."/>
            <person name="Clegg S.M."/>
            <person name="Cobley V.E."/>
            <person name="Cole C.G."/>
            <person name="Collier R.E."/>
            <person name="Connor R."/>
            <person name="Conroy D."/>
            <person name="Corby N.R."/>
            <person name="Coville G.J."/>
            <person name="Cox A.V."/>
            <person name="Davis J."/>
            <person name="Dawson E."/>
            <person name="Dhami P.D."/>
            <person name="Dockree C."/>
            <person name="Dodsworth S.J."/>
            <person name="Durbin R.M."/>
            <person name="Ellington A.G."/>
            <person name="Evans K.L."/>
            <person name="Fey J.M."/>
            <person name="Fleming K."/>
            <person name="French L."/>
            <person name="Garner A.A."/>
            <person name="Gilbert J.G.R."/>
            <person name="Goward M.E."/>
            <person name="Grafham D.V."/>
            <person name="Griffiths M.N.D."/>
            <person name="Hall C."/>
            <person name="Hall R.E."/>
            <person name="Hall-Tamlyn G."/>
            <person name="Heathcott R.W."/>
            <person name="Ho S."/>
            <person name="Holmes S."/>
            <person name="Hunt S.E."/>
            <person name="Jones M.C."/>
            <person name="Kershaw J."/>
            <person name="Kimberley A.M."/>
            <person name="King A."/>
            <person name="Laird G.K."/>
            <person name="Langford C.F."/>
            <person name="Leversha M.A."/>
            <person name="Lloyd C."/>
            <person name="Lloyd D.M."/>
            <person name="Martyn I.D."/>
            <person name="Mashreghi-Mohammadi M."/>
            <person name="Matthews L.H."/>
            <person name="Mccann O.T."/>
            <person name="Mcclay J."/>
            <person name="Mclaren S."/>
            <person name="McMurray A.A."/>
            <person name="Milne S.A."/>
            <person name="Mortimore B.J."/>
            <person name="Odell C.N."/>
            <person name="Pavitt R."/>
            <person name="Pearce A.V."/>
            <person name="Pearson D."/>
            <person name="Phillimore B.J.C.T."/>
            <person name="Phillips S.H."/>
            <person name="Plumb R.W."/>
            <person name="Ramsay H."/>
            <person name="Ramsey Y."/>
            <person name="Rogers L."/>
            <person name="Ross M.T."/>
            <person name="Scott C.E."/>
            <person name="Sehra H.K."/>
            <person name="Skuce C.D."/>
            <person name="Smalley S."/>
            <person name="Smith M.L."/>
            <person name="Soderlund C."/>
            <person name="Spragon L."/>
            <person name="Steward C.A."/>
            <person name="Sulston J.E."/>
            <person name="Swann R.M."/>
            <person name="Vaudin M."/>
            <person name="Wall M."/>
            <person name="Wallis J.M."/>
            <person name="Whiteley M.N."/>
            <person name="Willey D.L."/>
            <person name="Williams L."/>
            <person name="Williams S.A."/>
            <person name="Williamson H."/>
            <person name="Wilmer T.E."/>
            <person name="Wilming L."/>
            <person name="Wright C.L."/>
            <person name="Hubbard T."/>
            <person name="Bentley D.R."/>
            <person name="Beck S."/>
            <person name="Rogers J."/>
            <person name="Shimizu N."/>
            <person name="Minoshima S."/>
            <person name="Kawasaki K."/>
            <person name="Sasaki T."/>
            <person name="Asakawa S."/>
            <person name="Kudoh J."/>
            <person name="Shintani A."/>
            <person name="Shibuya K."/>
            <person name="Yoshizaki Y."/>
            <person name="Aoki N."/>
            <person name="Mitsuyama S."/>
            <person name="Roe B.A."/>
            <person name="Chen F."/>
            <person name="Chu L."/>
            <person name="Crabtree J."/>
            <person name="Deschamps S."/>
            <person name="Do A."/>
            <person name="Do T."/>
            <person name="Dorman A."/>
            <person name="Fang F."/>
            <person name="Fu Y."/>
            <person name="Hu P."/>
            <person name="Hua A."/>
            <person name="Kenton S."/>
            <person name="Lai H."/>
            <person name="Lao H.I."/>
            <person name="Lewis J."/>
            <person name="Lewis S."/>
            <person name="Lin S.-P."/>
            <person name="Loh P."/>
            <person name="Malaj E."/>
            <person name="Nguyen T."/>
            <person name="Pan H."/>
            <person name="Phan S."/>
            <person name="Qi S."/>
            <person name="Qian Y."/>
            <person name="Ray L."/>
            <person name="Ren Q."/>
            <person name="Shaull S."/>
            <person name="Sloan D."/>
            <person name="Song L."/>
            <person name="Wang Q."/>
            <person name="Wang Y."/>
            <person name="Wang Z."/>
            <person name="White J."/>
            <person name="Willingham D."/>
            <person name="Wu H."/>
            <person name="Yao Z."/>
            <person name="Zhan M."/>
            <person name="Zhang G."/>
            <person name="Chissoe S."/>
            <person name="Murray J."/>
            <person name="Miller N."/>
            <person name="Minx P."/>
            <person name="Fulton R."/>
            <person name="Johnson D."/>
            <person name="Bemis G."/>
            <person name="Bentley D."/>
            <person name="Bradshaw H."/>
            <person name="Bourne S."/>
            <person name="Cordes M."/>
            <person name="Du Z."/>
            <person name="Fulton L."/>
            <person name="Goela D."/>
            <person name="Graves T."/>
            <person name="Hawkins J."/>
            <person name="Hinds K."/>
            <person name="Kemp K."/>
            <person name="Latreille P."/>
            <person name="Layman D."/>
            <person name="Ozersky P."/>
            <person name="Rohlfing T."/>
            <person name="Scheet P."/>
            <person name="Walker C."/>
            <person name="Wamsley A."/>
            <person name="Wohldmann P."/>
            <person name="Pepin K."/>
            <person name="Nelson J."/>
            <person name="Korf I."/>
            <person name="Bedell J.A."/>
            <person name="Hillier L.W."/>
            <person name="Mardis E."/>
            <person name="Waterston R."/>
            <person name="Wilson R."/>
            <person name="Emanuel B.S."/>
            <person name="Shaikh T."/>
            <person name="Kurahashi H."/>
            <person name="Saitta S."/>
            <person name="Budarf M.L."/>
            <person name="McDermid H.E."/>
            <person name="Johnson A."/>
            <person name="Wong A.C.C."/>
            <person name="Morrow B.E."/>
            <person name="Edelmann L."/>
            <person name="Kim U.J."/>
            <person name="Shizuya H."/>
            <person name="Simon M.I."/>
            <person name="Dumanski J.P."/>
            <person name="Peyrard M."/>
            <person name="Kedra D."/>
            <person name="Seroussi E."/>
            <person name="Fransson I."/>
            <person name="Tapia I."/>
            <person name="Bruder C.E."/>
            <person name="O'Brien K.P."/>
            <person name="Wilkinson P."/>
            <person name="Bodenteich A."/>
            <person name="Hartman K."/>
            <person name="Hu X."/>
            <person name="Khan A.S."/>
            <person name="Lane L."/>
            <person name="Tilahun Y."/>
            <person name="Wright H."/>
        </authorList>
    </citation>
    <scope>NUCLEOTIDE SEQUENCE [LARGE SCALE GENOMIC DNA]</scope>
</reference>
<reference key="5">
    <citation type="submission" date="2005-07" db="EMBL/GenBank/DDBJ databases">
        <authorList>
            <person name="Mural R.J."/>
            <person name="Istrail S."/>
            <person name="Sutton G.G."/>
            <person name="Florea L."/>
            <person name="Halpern A.L."/>
            <person name="Mobarry C.M."/>
            <person name="Lippert R."/>
            <person name="Walenz B."/>
            <person name="Shatkay H."/>
            <person name="Dew I."/>
            <person name="Miller J.R."/>
            <person name="Flanigan M.J."/>
            <person name="Edwards N.J."/>
            <person name="Bolanos R."/>
            <person name="Fasulo D."/>
            <person name="Halldorsson B.V."/>
            <person name="Hannenhalli S."/>
            <person name="Turner R."/>
            <person name="Yooseph S."/>
            <person name="Lu F."/>
            <person name="Nusskern D.R."/>
            <person name="Shue B.C."/>
            <person name="Zheng X.H."/>
            <person name="Zhong F."/>
            <person name="Delcher A.L."/>
            <person name="Huson D.H."/>
            <person name="Kravitz S.A."/>
            <person name="Mouchard L."/>
            <person name="Reinert K."/>
            <person name="Remington K.A."/>
            <person name="Clark A.G."/>
            <person name="Waterman M.S."/>
            <person name="Eichler E.E."/>
            <person name="Adams M.D."/>
            <person name="Hunkapiller M.W."/>
            <person name="Myers E.W."/>
            <person name="Venter J.C."/>
        </authorList>
    </citation>
    <scope>NUCLEOTIDE SEQUENCE [LARGE SCALE GENOMIC DNA]</scope>
</reference>
<reference key="6">
    <citation type="journal article" date="2004" name="Genome Res.">
        <title>The status, quality, and expansion of the NIH full-length cDNA project: the Mammalian Gene Collection (MGC).</title>
        <authorList>
            <consortium name="The MGC Project Team"/>
        </authorList>
    </citation>
    <scope>NUCLEOTIDE SEQUENCE [LARGE SCALE MRNA] (ISOFORMS 1 AND 2)</scope>
    <scope>VARIANTS ALA-295 AND GLY-325</scope>
    <source>
        <tissue>Lung carcinoma</tissue>
        <tissue>Pancreatic carcinoma</tissue>
    </source>
</reference>
<reference key="7">
    <citation type="journal article" date="2004" name="Protein Sci.">
        <title>Signal peptide prediction based on analysis of experimentally verified cleavage sites.</title>
        <authorList>
            <person name="Zhang Z."/>
            <person name="Henzel W.J."/>
        </authorList>
    </citation>
    <scope>PROTEIN SEQUENCE OF 25-39</scope>
</reference>
<reference key="8">
    <citation type="journal article" date="2011" name="BMC Syst. Biol.">
        <title>Initial characterization of the human central proteome.</title>
        <authorList>
            <person name="Burkard T.R."/>
            <person name="Planyavsky M."/>
            <person name="Kaupe I."/>
            <person name="Breitwieser F.P."/>
            <person name="Buerckstuemmer T."/>
            <person name="Bennett K.L."/>
            <person name="Superti-Furga G."/>
            <person name="Colinge J."/>
        </authorList>
    </citation>
    <scope>IDENTIFICATION BY MASS SPECTROMETRY [LARGE SCALE ANALYSIS]</scope>
</reference>
<sequence>MRLPRRAALGLLPLLLLLPPAPEAAKKPTPCHRCRGLVDKFNQGMVDTAKKNFGGGNTAWEEKTLSKYESSEIRLLEILEGLCESSDFECNQMLEAQEEHLEAWWLQLKSEYPDLFEWFCVKTLKVCCSPGTYGPDCLACQGGSQRPCSGNGHCSGDGSRQGDGSCRCHMGYQGPLCTDCMDGYFSSLRNETHSICTACDESCKTCSGLTNRDCGECEVGWVLDEGACVDVDECAAEPPPCSAAQFCKNANGSYTCEECDSSCVGCTGEGPGNCKECISGYAREHGQCADVDECSLAEKTCVRKNENCYNTPGSYVCVCPDGFEETEDACVPPAEAEATEGESPTQLPSREDL</sequence>
<feature type="signal peptide" evidence="5">
    <location>
        <begin position="1"/>
        <end position="24"/>
    </location>
</feature>
<feature type="chain" id="PRO_0000256244" description="Protein disulfide isomerase CRELD2">
    <location>
        <begin position="25"/>
        <end position="353"/>
    </location>
</feature>
<feature type="domain" description="EGF-like 1" evidence="3">
    <location>
        <begin position="136"/>
        <end position="178"/>
    </location>
</feature>
<feature type="repeat" description="FU 1">
    <location>
        <begin position="193"/>
        <end position="240"/>
    </location>
</feature>
<feature type="repeat" description="FU 2">
    <location>
        <begin position="253"/>
        <end position="302"/>
    </location>
</feature>
<feature type="domain" description="EGF-like 2; calcium-binding" evidence="3">
    <location>
        <begin position="290"/>
        <end position="331"/>
    </location>
</feature>
<feature type="region of interest" description="Disordered" evidence="4">
    <location>
        <begin position="332"/>
        <end position="353"/>
    </location>
</feature>
<feature type="short sequence motif" description="CXXC" evidence="1">
    <location>
        <begin position="31"/>
        <end position="34"/>
    </location>
</feature>
<feature type="short sequence motif" description="CXXC" evidence="1">
    <location>
        <begin position="263"/>
        <end position="266"/>
    </location>
</feature>
<feature type="compositionally biased region" description="Polar residues" evidence="4">
    <location>
        <begin position="342"/>
        <end position="353"/>
    </location>
</feature>
<feature type="glycosylation site" description="N-linked (GlcNAc...) asparagine" evidence="2">
    <location>
        <position position="251"/>
    </location>
</feature>
<feature type="disulfide bond" description="Redox-active" evidence="1">
    <location>
        <begin position="31"/>
        <end position="34"/>
    </location>
</feature>
<feature type="disulfide bond" evidence="3">
    <location>
        <begin position="140"/>
        <end position="154"/>
    </location>
</feature>
<feature type="disulfide bond" evidence="3">
    <location>
        <begin position="148"/>
        <end position="166"/>
    </location>
</feature>
<feature type="disulfide bond" evidence="3">
    <location>
        <begin position="168"/>
        <end position="177"/>
    </location>
</feature>
<feature type="disulfide bond" description="Redox-active" evidence="1">
    <location>
        <begin position="263"/>
        <end position="266"/>
    </location>
</feature>
<feature type="disulfide bond" evidence="3">
    <location>
        <begin position="294"/>
        <end position="308"/>
    </location>
</feature>
<feature type="disulfide bond" evidence="3">
    <location>
        <begin position="301"/>
        <end position="317"/>
    </location>
</feature>
<feature type="disulfide bond" evidence="3">
    <location>
        <begin position="319"/>
        <end position="330"/>
    </location>
</feature>
<feature type="splice variant" id="VSP_021339" description="In isoform 5." evidence="11">
    <original>T</original>
    <variation>TVRTGLSDSYPPCCLSLGCWRGVGHAWIRGRNTHTQPGYSSRVWIAAFSP</variation>
    <location>
        <position position="197"/>
    </location>
</feature>
<feature type="splice variant" id="VSP_021340" description="In isoform 4." evidence="11">
    <location>
        <begin position="230"/>
        <end position="257"/>
    </location>
</feature>
<feature type="splice variant" id="VSP_021341" description="In isoform 2." evidence="9 11">
    <location>
        <begin position="258"/>
        <end position="289"/>
    </location>
</feature>
<feature type="splice variant" id="VSP_021342" description="In isoform 3." evidence="10">
    <original>ECDSSCVGCTGEGPGNCKECISGYARE</original>
    <variation>GGPGGRVCTPGPAGFRCCLCQHSFMAS</variation>
    <location>
        <begin position="258"/>
        <end position="284"/>
    </location>
</feature>
<feature type="splice variant" id="VSP_021343" description="In isoform 3." evidence="10">
    <location>
        <begin position="285"/>
        <end position="353"/>
    </location>
</feature>
<feature type="splice variant" id="VSP_021344" description="In isoform 6." evidence="11">
    <original>EATEGESPTQLPSREDL</original>
    <variation>GEWHGCPPHRLPSPGPQGLHVDWLLGLKSTQMVALRW</variation>
    <location>
        <begin position="337"/>
        <end position="353"/>
    </location>
</feature>
<feature type="sequence variant" id="VAR_028892" description="In dbSNP:rs8139422.">
    <original>D</original>
    <variation>E</variation>
    <location>
        <position position="182"/>
    </location>
</feature>
<feature type="sequence variant" id="VAR_028893" description="In dbSNP:rs11545762." evidence="6">
    <original>S</original>
    <variation>A</variation>
    <location>
        <position position="295"/>
    </location>
</feature>
<feature type="sequence variant" id="VAR_028894" description="In dbSNP:rs11545763." evidence="6">
    <original>E</original>
    <variation>G</variation>
    <location>
        <position position="325"/>
    </location>
</feature>
<gene>
    <name type="primary">CRELD2</name>
    <name type="ORF">UNQ185/PRO211</name>
</gene>
<name>CREL2_HUMAN</name>
<organism>
    <name type="scientific">Homo sapiens</name>
    <name type="common">Human</name>
    <dbReference type="NCBI Taxonomy" id="9606"/>
    <lineage>
        <taxon>Eukaryota</taxon>
        <taxon>Metazoa</taxon>
        <taxon>Chordata</taxon>
        <taxon>Craniata</taxon>
        <taxon>Vertebrata</taxon>
        <taxon>Euteleostomi</taxon>
        <taxon>Mammalia</taxon>
        <taxon>Eutheria</taxon>
        <taxon>Euarchontoglires</taxon>
        <taxon>Primates</taxon>
        <taxon>Haplorrhini</taxon>
        <taxon>Catarrhini</taxon>
        <taxon>Hominidae</taxon>
        <taxon>Homo</taxon>
    </lineage>
</organism>
<evidence type="ECO:0000250" key="1">
    <source>
        <dbReference type="UniProtKB" id="Q9CYA0"/>
    </source>
</evidence>
<evidence type="ECO:0000255" key="2"/>
<evidence type="ECO:0000255" key="3">
    <source>
        <dbReference type="PROSITE-ProRule" id="PRU00076"/>
    </source>
</evidence>
<evidence type="ECO:0000256" key="4">
    <source>
        <dbReference type="SAM" id="MobiDB-lite"/>
    </source>
</evidence>
<evidence type="ECO:0000269" key="5">
    <source>
    </source>
</evidence>
<evidence type="ECO:0000269" key="6">
    <source>
    </source>
</evidence>
<evidence type="ECO:0000269" key="7">
    <source>
    </source>
</evidence>
<evidence type="ECO:0000269" key="8">
    <source>
    </source>
</evidence>
<evidence type="ECO:0000303" key="9">
    <source>
    </source>
</evidence>
<evidence type="ECO:0000303" key="10">
    <source>
    </source>
</evidence>
<evidence type="ECO:0000303" key="11">
    <source>
    </source>
</evidence>
<evidence type="ECO:0000305" key="12"/>
<proteinExistence type="evidence at protein level"/>
<dbReference type="EC" id="5.3.4.1" evidence="1"/>
<dbReference type="EMBL" id="AJ968414">
    <property type="protein sequence ID" value="CAI91316.1"/>
    <property type="molecule type" value="mRNA"/>
</dbReference>
<dbReference type="EMBL" id="DQ470676">
    <property type="protein sequence ID" value="ABF06668.1"/>
    <property type="molecule type" value="mRNA"/>
</dbReference>
<dbReference type="EMBL" id="DQ470677">
    <property type="protein sequence ID" value="ABF06669.1"/>
    <property type="molecule type" value="mRNA"/>
</dbReference>
<dbReference type="EMBL" id="DQ470678">
    <property type="protein sequence ID" value="ABF06670.1"/>
    <property type="molecule type" value="mRNA"/>
</dbReference>
<dbReference type="EMBL" id="DQ470679">
    <property type="protein sequence ID" value="ABF06671.1"/>
    <property type="molecule type" value="mRNA"/>
</dbReference>
<dbReference type="EMBL" id="DQ470680">
    <property type="protein sequence ID" value="ABF06672.1"/>
    <property type="molecule type" value="mRNA"/>
</dbReference>
<dbReference type="EMBL" id="AY358355">
    <property type="protein sequence ID" value="AAQ88721.1"/>
    <property type="molecule type" value="mRNA"/>
</dbReference>
<dbReference type="EMBL" id="AL671710">
    <property type="status" value="NOT_ANNOTATED_CDS"/>
    <property type="molecule type" value="Genomic_DNA"/>
</dbReference>
<dbReference type="EMBL" id="CH471138">
    <property type="protein sequence ID" value="EAW73483.1"/>
    <property type="molecule type" value="Genomic_DNA"/>
</dbReference>
<dbReference type="EMBL" id="CH471138">
    <property type="protein sequence ID" value="EAW73484.1"/>
    <property type="molecule type" value="Genomic_DNA"/>
</dbReference>
<dbReference type="EMBL" id="BC002894">
    <property type="protein sequence ID" value="AAH02894.1"/>
    <property type="molecule type" value="mRNA"/>
</dbReference>
<dbReference type="EMBL" id="BC050675">
    <property type="protein sequence ID" value="AAH50675.1"/>
    <property type="molecule type" value="mRNA"/>
</dbReference>
<dbReference type="CCDS" id="CCDS14082.1">
    <molecule id="Q6UXH1-1"/>
</dbReference>
<dbReference type="CCDS" id="CCDS46730.1">
    <molecule id="Q6UXH1-5"/>
</dbReference>
<dbReference type="CCDS" id="CCDS63515.1">
    <molecule id="Q6UXH1-2"/>
</dbReference>
<dbReference type="CCDS" id="CCDS63516.1">
    <molecule id="Q6UXH1-4"/>
</dbReference>
<dbReference type="RefSeq" id="NP_001128573.1">
    <molecule id="Q6UXH1-5"/>
    <property type="nucleotide sequence ID" value="NM_001135101.3"/>
</dbReference>
<dbReference type="RefSeq" id="NP_001271246.1">
    <molecule id="Q6UXH1-4"/>
    <property type="nucleotide sequence ID" value="NM_001284317.2"/>
</dbReference>
<dbReference type="RefSeq" id="NP_001271247.1">
    <molecule id="Q6UXH1-2"/>
    <property type="nucleotide sequence ID" value="NM_001284318.2"/>
</dbReference>
<dbReference type="RefSeq" id="NP_077300.3">
    <molecule id="Q6UXH1-1"/>
    <property type="nucleotide sequence ID" value="NM_024324.4"/>
</dbReference>
<dbReference type="RefSeq" id="XP_005261795.1">
    <molecule id="Q6UXH1-6"/>
    <property type="nucleotide sequence ID" value="XM_005261738.6"/>
</dbReference>
<dbReference type="RefSeq" id="XP_054181884.1">
    <molecule id="Q6UXH1-6"/>
    <property type="nucleotide sequence ID" value="XM_054325909.1"/>
</dbReference>
<dbReference type="BioGRID" id="122591">
    <property type="interactions" value="114"/>
</dbReference>
<dbReference type="FunCoup" id="Q6UXH1">
    <property type="interactions" value="805"/>
</dbReference>
<dbReference type="IntAct" id="Q6UXH1">
    <property type="interactions" value="89"/>
</dbReference>
<dbReference type="MINT" id="Q6UXH1"/>
<dbReference type="STRING" id="9606.ENSP00000383938"/>
<dbReference type="GlyConnect" id="1164">
    <property type="glycosylation" value="7 N-Linked glycans (2 sites)"/>
</dbReference>
<dbReference type="GlyCosmos" id="Q6UXH1">
    <property type="glycosylation" value="2 sites, 7 glycans"/>
</dbReference>
<dbReference type="GlyGen" id="Q6UXH1">
    <property type="glycosylation" value="7 sites, 22 N-linked glycans (2 sites), 2 O-linked glycans (3 sites)"/>
</dbReference>
<dbReference type="iPTMnet" id="Q6UXH1"/>
<dbReference type="PhosphoSitePlus" id="Q6UXH1"/>
<dbReference type="BioMuta" id="CRELD2"/>
<dbReference type="DMDM" id="74738218"/>
<dbReference type="jPOST" id="Q6UXH1"/>
<dbReference type="MassIVE" id="Q6UXH1"/>
<dbReference type="PeptideAtlas" id="Q6UXH1"/>
<dbReference type="ProteomicsDB" id="67616">
    <molecule id="Q6UXH1-1"/>
</dbReference>
<dbReference type="ProteomicsDB" id="67617">
    <molecule id="Q6UXH1-2"/>
</dbReference>
<dbReference type="ProteomicsDB" id="67618">
    <molecule id="Q6UXH1-3"/>
</dbReference>
<dbReference type="ProteomicsDB" id="67619">
    <molecule id="Q6UXH1-4"/>
</dbReference>
<dbReference type="ProteomicsDB" id="67620">
    <molecule id="Q6UXH1-5"/>
</dbReference>
<dbReference type="ProteomicsDB" id="67621">
    <molecule id="Q6UXH1-6"/>
</dbReference>
<dbReference type="Pumba" id="Q6UXH1"/>
<dbReference type="Antibodypedia" id="200">
    <property type="antibodies" value="207 antibodies from 26 providers"/>
</dbReference>
<dbReference type="DNASU" id="79174"/>
<dbReference type="Ensembl" id="ENST00000328268.9">
    <molecule id="Q6UXH1-1"/>
    <property type="protein sequence ID" value="ENSP00000332223.4"/>
    <property type="gene ID" value="ENSG00000184164.15"/>
</dbReference>
<dbReference type="Ensembl" id="ENST00000403427.3">
    <molecule id="Q6UXH1-4"/>
    <property type="protein sequence ID" value="ENSP00000384111.3"/>
    <property type="gene ID" value="ENSG00000184164.15"/>
</dbReference>
<dbReference type="Ensembl" id="ENST00000404488.7">
    <molecule id="Q6UXH1-5"/>
    <property type="protein sequence ID" value="ENSP00000383938.3"/>
    <property type="gene ID" value="ENSG00000184164.15"/>
</dbReference>
<dbReference type="Ensembl" id="ENST00000407217.7">
    <molecule id="Q6UXH1-2"/>
    <property type="protein sequence ID" value="ENSP00000386034.3"/>
    <property type="gene ID" value="ENSG00000184164.15"/>
</dbReference>
<dbReference type="GeneID" id="79174"/>
<dbReference type="KEGG" id="hsa:79174"/>
<dbReference type="MANE-Select" id="ENST00000328268.9">
    <property type="protein sequence ID" value="ENSP00000332223.4"/>
    <property type="RefSeq nucleotide sequence ID" value="NM_024324.5"/>
    <property type="RefSeq protein sequence ID" value="NP_077300.3"/>
</dbReference>
<dbReference type="UCSC" id="uc003bja.4">
    <molecule id="Q6UXH1-1"/>
    <property type="organism name" value="human"/>
</dbReference>
<dbReference type="AGR" id="HGNC:28150"/>
<dbReference type="CTD" id="79174"/>
<dbReference type="DisGeNET" id="79174"/>
<dbReference type="GeneCards" id="CRELD2"/>
<dbReference type="HGNC" id="HGNC:28150">
    <property type="gene designation" value="CRELD2"/>
</dbReference>
<dbReference type="HPA" id="ENSG00000184164">
    <property type="expression patterns" value="Low tissue specificity"/>
</dbReference>
<dbReference type="MIM" id="607171">
    <property type="type" value="gene"/>
</dbReference>
<dbReference type="neXtProt" id="NX_Q6UXH1"/>
<dbReference type="OpenTargets" id="ENSG00000184164"/>
<dbReference type="PharmGKB" id="PA142672079"/>
<dbReference type="VEuPathDB" id="HostDB:ENSG00000184164"/>
<dbReference type="GeneTree" id="ENSGT00940000160071"/>
<dbReference type="HOGENOM" id="CLU_038974_1_0_1"/>
<dbReference type="InParanoid" id="Q6UXH1"/>
<dbReference type="OMA" id="TDNFNKG"/>
<dbReference type="OrthoDB" id="19903at2759"/>
<dbReference type="PAN-GO" id="Q6UXH1">
    <property type="GO annotations" value="0 GO annotations based on evolutionary models"/>
</dbReference>
<dbReference type="PhylomeDB" id="Q6UXH1"/>
<dbReference type="TreeFam" id="TF316507"/>
<dbReference type="PathwayCommons" id="Q6UXH1"/>
<dbReference type="SignaLink" id="Q6UXH1"/>
<dbReference type="BioGRID-ORCS" id="79174">
    <property type="hits" value="10 hits in 1159 CRISPR screens"/>
</dbReference>
<dbReference type="ChiTaRS" id="CRELD2">
    <property type="organism name" value="human"/>
</dbReference>
<dbReference type="GeneWiki" id="CRELD2"/>
<dbReference type="GenomeRNAi" id="79174"/>
<dbReference type="Pharos" id="Q6UXH1">
    <property type="development level" value="Tbio"/>
</dbReference>
<dbReference type="PRO" id="PR:Q6UXH1"/>
<dbReference type="Proteomes" id="UP000005640">
    <property type="component" value="Chromosome 22"/>
</dbReference>
<dbReference type="RNAct" id="Q6UXH1">
    <property type="molecule type" value="protein"/>
</dbReference>
<dbReference type="Bgee" id="ENSG00000184164">
    <property type="expression patterns" value="Expressed in secondary oocyte and 202 other cell types or tissues"/>
</dbReference>
<dbReference type="ExpressionAtlas" id="Q6UXH1">
    <property type="expression patterns" value="baseline and differential"/>
</dbReference>
<dbReference type="GO" id="GO:0005783">
    <property type="term" value="C:endoplasmic reticulum"/>
    <property type="evidence" value="ECO:0007669"/>
    <property type="project" value="UniProtKB-SubCell"/>
</dbReference>
<dbReference type="GO" id="GO:0005615">
    <property type="term" value="C:extracellular space"/>
    <property type="evidence" value="ECO:0007669"/>
    <property type="project" value="Ensembl"/>
</dbReference>
<dbReference type="GO" id="GO:0005794">
    <property type="term" value="C:Golgi apparatus"/>
    <property type="evidence" value="ECO:0007669"/>
    <property type="project" value="Ensembl"/>
</dbReference>
<dbReference type="GO" id="GO:0005509">
    <property type="term" value="F:calcium ion binding"/>
    <property type="evidence" value="ECO:0007669"/>
    <property type="project" value="InterPro"/>
</dbReference>
<dbReference type="GO" id="GO:0003756">
    <property type="term" value="F:protein disulfide isomerase activity"/>
    <property type="evidence" value="ECO:0007669"/>
    <property type="project" value="UniProtKB-EC"/>
</dbReference>
<dbReference type="CDD" id="cd00064">
    <property type="entry name" value="FU"/>
    <property type="match status" value="2"/>
</dbReference>
<dbReference type="FunFam" id="2.10.25.10:FF:000038">
    <property type="entry name" value="Fibrillin 2"/>
    <property type="match status" value="1"/>
</dbReference>
<dbReference type="Gene3D" id="2.10.220.10">
    <property type="entry name" value="Hormone Receptor, Insulin-like Growth Factor Receptor 1, Chain A, domain 2"/>
    <property type="match status" value="1"/>
</dbReference>
<dbReference type="Gene3D" id="2.10.25.10">
    <property type="entry name" value="Laminin"/>
    <property type="match status" value="1"/>
</dbReference>
<dbReference type="InterPro" id="IPR001881">
    <property type="entry name" value="EGF-like_Ca-bd_dom"/>
</dbReference>
<dbReference type="InterPro" id="IPR000742">
    <property type="entry name" value="EGF-like_dom"/>
</dbReference>
<dbReference type="InterPro" id="IPR000152">
    <property type="entry name" value="EGF-type_Asp/Asn_hydroxyl_site"/>
</dbReference>
<dbReference type="InterPro" id="IPR018097">
    <property type="entry name" value="EGF_Ca-bd_CS"/>
</dbReference>
<dbReference type="InterPro" id="IPR006212">
    <property type="entry name" value="Furin_repeat"/>
</dbReference>
<dbReference type="InterPro" id="IPR009030">
    <property type="entry name" value="Growth_fac_rcpt_cys_sf"/>
</dbReference>
<dbReference type="InterPro" id="IPR002049">
    <property type="entry name" value="LE_dom"/>
</dbReference>
<dbReference type="InterPro" id="IPR049883">
    <property type="entry name" value="NOTCH1_EGF-like"/>
</dbReference>
<dbReference type="PANTHER" id="PTHR24039:SF28">
    <property type="entry name" value="EGF-LIKE DOMAIN-CONTAINING PROTEIN"/>
    <property type="match status" value="1"/>
</dbReference>
<dbReference type="PANTHER" id="PTHR24039">
    <property type="entry name" value="FIBRILLIN-RELATED"/>
    <property type="match status" value="1"/>
</dbReference>
<dbReference type="Pfam" id="PF07645">
    <property type="entry name" value="EGF_CA"/>
    <property type="match status" value="2"/>
</dbReference>
<dbReference type="SMART" id="SM00181">
    <property type="entry name" value="EGF"/>
    <property type="match status" value="4"/>
</dbReference>
<dbReference type="SMART" id="SM00179">
    <property type="entry name" value="EGF_CA"/>
    <property type="match status" value="2"/>
</dbReference>
<dbReference type="SMART" id="SM00261">
    <property type="entry name" value="FU"/>
    <property type="match status" value="2"/>
</dbReference>
<dbReference type="SUPFAM" id="SSF57184">
    <property type="entry name" value="Growth factor receptor domain"/>
    <property type="match status" value="1"/>
</dbReference>
<dbReference type="PROSITE" id="PS00010">
    <property type="entry name" value="ASX_HYDROXYL"/>
    <property type="match status" value="1"/>
</dbReference>
<dbReference type="PROSITE" id="PS00022">
    <property type="entry name" value="EGF_1"/>
    <property type="match status" value="1"/>
</dbReference>
<dbReference type="PROSITE" id="PS01186">
    <property type="entry name" value="EGF_2"/>
    <property type="match status" value="2"/>
</dbReference>
<dbReference type="PROSITE" id="PS50026">
    <property type="entry name" value="EGF_3"/>
    <property type="match status" value="2"/>
</dbReference>
<dbReference type="PROSITE" id="PS01187">
    <property type="entry name" value="EGF_CA"/>
    <property type="match status" value="2"/>
</dbReference>
<comment type="function">
    <text evidence="1 7">Protein disulfide isomerase (By similarity). Might play a role in the unfolded protein response (By similarity). May regulate transport of alpha4-beta2 neuronal acetylcholine receptor (PubMed:16238698).</text>
</comment>
<comment type="catalytic activity">
    <reaction evidence="1">
        <text>Catalyzes the rearrangement of -S-S- bonds in proteins.</text>
        <dbReference type="EC" id="5.3.4.1"/>
    </reaction>
</comment>
<comment type="subunit">
    <text evidence="1 7">Interacts with CHRNA4 (PubMed:16238698). Component of a complex containing at least CRELD2, MANF, MATN3 and PDIA4 (By similarity).</text>
</comment>
<comment type="interaction">
    <interactant intactId="EBI-3935314">
        <id>Q6UXH1</id>
    </interactant>
    <interactant intactId="EBI-375053">
        <id>P42771</id>
        <label>CDKN2A</label>
    </interactant>
    <organismsDiffer>false</organismsDiffer>
    <experiments>2</experiments>
</comment>
<comment type="interaction">
    <interactant intactId="EBI-21348071">
        <id>Q6UXH1-1</id>
    </interactant>
    <interactant intactId="EBI-7132379">
        <id>P43681</id>
        <label>CHRNA4</label>
    </interactant>
    <organismsDiffer>false</organismsDiffer>
    <experiments>3</experiments>
</comment>
<comment type="interaction">
    <interactant intactId="EBI-21670927">
        <id>Q6UXH1-2</id>
    </interactant>
    <interactant intactId="EBI-1049597">
        <id>P27797</id>
        <label>CALR</label>
    </interactant>
    <organismsDiffer>false</organismsDiffer>
    <experiments>3</experiments>
</comment>
<comment type="interaction">
    <interactant intactId="EBI-21670927">
        <id>Q6UXH1-2</id>
    </interactant>
    <interactant intactId="EBI-727477">
        <id>P12830</id>
        <label>CDH1</label>
    </interactant>
    <organismsDiffer>false</organismsDiffer>
    <experiments>3</experiments>
</comment>
<comment type="interaction">
    <interactant intactId="EBI-21670927">
        <id>Q6UXH1-2</id>
    </interactant>
    <interactant intactId="EBI-746189">
        <id>Q15078</id>
        <label>CDK5R1</label>
    </interactant>
    <organismsDiffer>false</organismsDiffer>
    <experiments>3</experiments>
</comment>
<comment type="interaction">
    <interactant intactId="EBI-21670927">
        <id>Q6UXH1-2</id>
    </interactant>
    <interactant intactId="EBI-351007">
        <id>P36957</id>
        <label>DLST</label>
    </interactant>
    <organismsDiffer>false</organismsDiffer>
    <experiments>3</experiments>
</comment>
<comment type="interaction">
    <interactant intactId="EBI-21670927">
        <id>Q6UXH1-2</id>
    </interactant>
    <interactant intactId="EBI-466029">
        <id>P42858</id>
        <label>HTT</label>
    </interactant>
    <organismsDiffer>false</organismsDiffer>
    <experiments>6</experiments>
</comment>
<comment type="interaction">
    <interactant intactId="EBI-21670927">
        <id>Q6UXH1-2</id>
    </interactant>
    <interactant intactId="EBI-1055945">
        <id>Q8TDX7</id>
        <label>NEK7</label>
    </interactant>
    <organismsDiffer>false</organismsDiffer>
    <experiments>3</experiments>
</comment>
<comment type="interaction">
    <interactant intactId="EBI-21670927">
        <id>Q6UXH1-2</id>
    </interactant>
    <interactant intactId="EBI-50433196">
        <id>A0A6Q8PF08</id>
        <label>PMP22</label>
    </interactant>
    <organismsDiffer>false</organismsDiffer>
    <experiments>3</experiments>
</comment>
<comment type="interaction">
    <interactant intactId="EBI-21670927">
        <id>Q6UXH1-2</id>
    </interactant>
    <interactant intactId="EBI-5235340">
        <id>Q7Z699</id>
        <label>SPRED1</label>
    </interactant>
    <organismsDiffer>false</organismsDiffer>
    <experiments>3</experiments>
</comment>
<comment type="interaction">
    <interactant intactId="EBI-21670927">
        <id>Q6UXH1-2</id>
    </interactant>
    <interactant intactId="EBI-11952721">
        <id>Q05BL1</id>
        <label>TP53BP2</label>
    </interactant>
    <organismsDiffer>false</organismsDiffer>
    <experiments>3</experiments>
</comment>
<comment type="interaction">
    <interactant intactId="EBI-21348090">
        <id>Q6UXH1-3</id>
    </interactant>
    <interactant intactId="EBI-7132379">
        <id>P43681</id>
        <label>CHRNA4</label>
    </interactant>
    <organismsDiffer>false</organismsDiffer>
    <experiments>3</experiments>
</comment>
<comment type="subcellular location">
    <subcellularLocation>
        <location evidence="7">Endoplasmic reticulum</location>
    </subcellularLocation>
</comment>
<comment type="alternative products">
    <event type="alternative splicing"/>
    <isoform>
        <id>Q6UXH1-1</id>
        <name>1</name>
        <name>Delta</name>
        <sequence type="displayed"/>
    </isoform>
    <isoform>
        <id>Q6UXH1-2</id>
        <name>2</name>
        <name>Alpha</name>
        <sequence type="described" ref="VSP_021341"/>
    </isoform>
    <isoform>
        <id>Q6UXH1-3</id>
        <name>3</name>
        <name>Beta</name>
        <sequence type="described" ref="VSP_021342 VSP_021343"/>
    </isoform>
    <isoform>
        <id>Q6UXH1-4</id>
        <name>4</name>
        <name>Gamma</name>
        <sequence type="described" ref="VSP_021340"/>
    </isoform>
    <isoform>
        <id>Q6UXH1-5</id>
        <name>5</name>
        <name>Epsilon</name>
        <sequence type="described" ref="VSP_021339"/>
    </isoform>
    <isoform>
        <id>Q6UXH1-6</id>
        <name>6</name>
        <name>Zeta</name>
        <sequence type="described" ref="VSP_021344"/>
    </isoform>
</comment>
<comment type="tissue specificity">
    <text evidence="7 8">Ubiquitously expressed (PubMed:16238698). Highly expressed in skeletal muscle, heart, liver, kidney and placenta (PubMed:16238698).</text>
</comment>
<comment type="developmental stage">
    <text evidence="8">Expressed in all fetal tissues tested.</text>
</comment>
<comment type="miscellaneous">
    <molecule>Isoform 3</molecule>
    <text evidence="12">Minor isoform.</text>
</comment>
<comment type="similarity">
    <text evidence="12">Belongs to the CRELD family.</text>
</comment>
<keyword id="KW-0025">Alternative splicing</keyword>
<keyword id="KW-0106">Calcium</keyword>
<keyword id="KW-0903">Direct protein sequencing</keyword>
<keyword id="KW-1015">Disulfide bond</keyword>
<keyword id="KW-0245">EGF-like domain</keyword>
<keyword id="KW-0256">Endoplasmic reticulum</keyword>
<keyword id="KW-0325">Glycoprotein</keyword>
<keyword id="KW-0413">Isomerase</keyword>
<keyword id="KW-1267">Proteomics identification</keyword>
<keyword id="KW-0676">Redox-active center</keyword>
<keyword id="KW-1185">Reference proteome</keyword>
<keyword id="KW-0677">Repeat</keyword>
<keyword id="KW-0732">Signal</keyword>
<protein>
    <recommendedName>
        <fullName evidence="12">Protein disulfide isomerase CRELD2</fullName>
        <ecNumber evidence="1">5.3.4.1</ecNumber>
    </recommendedName>
    <alternativeName>
        <fullName evidence="12">Cysteine-rich with EGF-like domain protein 2</fullName>
    </alternativeName>
</protein>
<accession>Q6UXH1</accession>
<accession>A5GZA2</accession>
<accession>A5GZA3</accession>
<accession>A5GZA4</accession>
<accession>A5GZA5</accession>
<accession>A5GZA6</accession>
<accession>Q4W0V0</accession>
<accession>Q86UC0</accession>
<accession>Q9BU47</accession>